<reference key="1">
    <citation type="journal article" date="2002" name="Nature">
        <title>Complete genome sequence of the model actinomycete Streptomyces coelicolor A3(2).</title>
        <authorList>
            <person name="Bentley S.D."/>
            <person name="Chater K.F."/>
            <person name="Cerdeno-Tarraga A.-M."/>
            <person name="Challis G.L."/>
            <person name="Thomson N.R."/>
            <person name="James K.D."/>
            <person name="Harris D.E."/>
            <person name="Quail M.A."/>
            <person name="Kieser H."/>
            <person name="Harper D."/>
            <person name="Bateman A."/>
            <person name="Brown S."/>
            <person name="Chandra G."/>
            <person name="Chen C.W."/>
            <person name="Collins M."/>
            <person name="Cronin A."/>
            <person name="Fraser A."/>
            <person name="Goble A."/>
            <person name="Hidalgo J."/>
            <person name="Hornsby T."/>
            <person name="Howarth S."/>
            <person name="Huang C.-H."/>
            <person name="Kieser T."/>
            <person name="Larke L."/>
            <person name="Murphy L.D."/>
            <person name="Oliver K."/>
            <person name="O'Neil S."/>
            <person name="Rabbinowitsch E."/>
            <person name="Rajandream M.A."/>
            <person name="Rutherford K.M."/>
            <person name="Rutter S."/>
            <person name="Seeger K."/>
            <person name="Saunders D."/>
            <person name="Sharp S."/>
            <person name="Squares R."/>
            <person name="Squares S."/>
            <person name="Taylor K."/>
            <person name="Warren T."/>
            <person name="Wietzorrek A."/>
            <person name="Woodward J.R."/>
            <person name="Barrell B.G."/>
            <person name="Parkhill J."/>
            <person name="Hopwood D.A."/>
        </authorList>
    </citation>
    <scope>NUCLEOTIDE SEQUENCE [LARGE SCALE GENOMIC DNA]</scope>
    <source>
        <strain>ATCC BAA-471 / A3(2) / M145</strain>
    </source>
</reference>
<evidence type="ECO:0000250" key="1"/>
<evidence type="ECO:0000255" key="2">
    <source>
        <dbReference type="PROSITE-ProRule" id="PRU00434"/>
    </source>
</evidence>
<evidence type="ECO:0000305" key="3"/>
<dbReference type="EC" id="7.-.-.-"/>
<dbReference type="EMBL" id="AL939115">
    <property type="protein sequence ID" value="CAB59657.1"/>
    <property type="molecule type" value="Genomic_DNA"/>
</dbReference>
<dbReference type="RefSeq" id="NP_627377.1">
    <property type="nucleotide sequence ID" value="NC_003888.3"/>
</dbReference>
<dbReference type="SMR" id="Q9RKC6"/>
<dbReference type="STRING" id="100226.gene:17760778"/>
<dbReference type="PaxDb" id="100226-SCO3161"/>
<dbReference type="KEGG" id="sco:SCO3161"/>
<dbReference type="PATRIC" id="fig|100226.15.peg.3221"/>
<dbReference type="eggNOG" id="COG1122">
    <property type="taxonomic scope" value="Bacteria"/>
</dbReference>
<dbReference type="HOGENOM" id="CLU_000604_1_22_11"/>
<dbReference type="InParanoid" id="Q9RKC6"/>
<dbReference type="OrthoDB" id="9806471at2"/>
<dbReference type="PhylomeDB" id="Q9RKC6"/>
<dbReference type="Proteomes" id="UP000001973">
    <property type="component" value="Chromosome"/>
</dbReference>
<dbReference type="GO" id="GO:0043190">
    <property type="term" value="C:ATP-binding cassette (ABC) transporter complex"/>
    <property type="evidence" value="ECO:0000318"/>
    <property type="project" value="GO_Central"/>
</dbReference>
<dbReference type="GO" id="GO:0005524">
    <property type="term" value="F:ATP binding"/>
    <property type="evidence" value="ECO:0000318"/>
    <property type="project" value="GO_Central"/>
</dbReference>
<dbReference type="GO" id="GO:0016887">
    <property type="term" value="F:ATP hydrolysis activity"/>
    <property type="evidence" value="ECO:0007669"/>
    <property type="project" value="InterPro"/>
</dbReference>
<dbReference type="GO" id="GO:0042626">
    <property type="term" value="F:ATPase-coupled transmembrane transporter activity"/>
    <property type="evidence" value="ECO:0000318"/>
    <property type="project" value="GO_Central"/>
</dbReference>
<dbReference type="GO" id="GO:0006824">
    <property type="term" value="P:cobalt ion transport"/>
    <property type="evidence" value="ECO:0007669"/>
    <property type="project" value="InterPro"/>
</dbReference>
<dbReference type="CDD" id="cd03225">
    <property type="entry name" value="ABC_cobalt_CbiO_domain1"/>
    <property type="match status" value="1"/>
</dbReference>
<dbReference type="FunFam" id="3.40.50.300:FF:000224">
    <property type="entry name" value="Energy-coupling factor transporter ATP-binding protein EcfA"/>
    <property type="match status" value="1"/>
</dbReference>
<dbReference type="Gene3D" id="3.40.50.300">
    <property type="entry name" value="P-loop containing nucleotide triphosphate hydrolases"/>
    <property type="match status" value="1"/>
</dbReference>
<dbReference type="InterPro" id="IPR003593">
    <property type="entry name" value="AAA+_ATPase"/>
</dbReference>
<dbReference type="InterPro" id="IPR003439">
    <property type="entry name" value="ABC_transporter-like_ATP-bd"/>
</dbReference>
<dbReference type="InterPro" id="IPR017871">
    <property type="entry name" value="ABC_transporter-like_CS"/>
</dbReference>
<dbReference type="InterPro" id="IPR015856">
    <property type="entry name" value="ABC_transpr_CbiO/EcfA_su"/>
</dbReference>
<dbReference type="InterPro" id="IPR005876">
    <property type="entry name" value="Co_trans_ATP-bd"/>
</dbReference>
<dbReference type="InterPro" id="IPR050095">
    <property type="entry name" value="ECF_ABC_transporter_ATP-bd"/>
</dbReference>
<dbReference type="InterPro" id="IPR027417">
    <property type="entry name" value="P-loop_NTPase"/>
</dbReference>
<dbReference type="NCBIfam" id="TIGR01166">
    <property type="entry name" value="cbiO"/>
    <property type="match status" value="1"/>
</dbReference>
<dbReference type="PANTHER" id="PTHR43553:SF24">
    <property type="entry name" value="ENERGY-COUPLING FACTOR TRANSPORTER ATP-BINDING PROTEIN ECFA1"/>
    <property type="match status" value="1"/>
</dbReference>
<dbReference type="PANTHER" id="PTHR43553">
    <property type="entry name" value="HEAVY METAL TRANSPORTER"/>
    <property type="match status" value="1"/>
</dbReference>
<dbReference type="Pfam" id="PF00005">
    <property type="entry name" value="ABC_tran"/>
    <property type="match status" value="1"/>
</dbReference>
<dbReference type="SMART" id="SM00382">
    <property type="entry name" value="AAA"/>
    <property type="match status" value="1"/>
</dbReference>
<dbReference type="SUPFAM" id="SSF52540">
    <property type="entry name" value="P-loop containing nucleoside triphosphate hydrolases"/>
    <property type="match status" value="1"/>
</dbReference>
<dbReference type="PROSITE" id="PS00211">
    <property type="entry name" value="ABC_TRANSPORTER_1"/>
    <property type="match status" value="1"/>
</dbReference>
<dbReference type="PROSITE" id="PS50893">
    <property type="entry name" value="ABC_TRANSPORTER_2"/>
    <property type="match status" value="1"/>
</dbReference>
<organism>
    <name type="scientific">Streptomyces coelicolor (strain ATCC BAA-471 / A3(2) / M145)</name>
    <dbReference type="NCBI Taxonomy" id="100226"/>
    <lineage>
        <taxon>Bacteria</taxon>
        <taxon>Bacillati</taxon>
        <taxon>Actinomycetota</taxon>
        <taxon>Actinomycetes</taxon>
        <taxon>Kitasatosporales</taxon>
        <taxon>Streptomycetaceae</taxon>
        <taxon>Streptomyces</taxon>
        <taxon>Streptomyces albidoflavus group</taxon>
    </lineage>
</organism>
<keyword id="KW-0067">ATP-binding</keyword>
<keyword id="KW-1003">Cell membrane</keyword>
<keyword id="KW-0472">Membrane</keyword>
<keyword id="KW-0547">Nucleotide-binding</keyword>
<keyword id="KW-1185">Reference proteome</keyword>
<keyword id="KW-1278">Translocase</keyword>
<keyword id="KW-0813">Transport</keyword>
<accession>Q9RKC6</accession>
<sequence length="260" mass="27474">MTGPAAAPVPDAPASLDVSGLAFAYPDGHQALFGVDFCVARGERVALLGPNGAGKTTLVLHLNGILTGGTGTVTVAGLPVDKRNMAEIRRRVGIVFQDPDDQLFMPTVREDVAFGPAAAGVKGAELEACVDRALTLVGMAEFKDRPPHHLSFGQRRRVAVATVLAMEPEILVLDEPSSNLDPASRRELADILRSLDVTVLMVTHDLPYALELCPRALILSDGAIAADGPTAALLSDDDLMRAHRLELPFGFDPRSVRASG</sequence>
<gene>
    <name type="ordered locus">SCO3161</name>
    <name type="ORF">SCE87.12</name>
</gene>
<proteinExistence type="inferred from homology"/>
<name>Y3161_STRCO</name>
<feature type="chain" id="PRO_0000092093" description="Putative ABC transporter ATP-binding protein SCO3161">
    <location>
        <begin position="1"/>
        <end position="260"/>
    </location>
</feature>
<feature type="domain" description="ABC transporter" evidence="2">
    <location>
        <begin position="16"/>
        <end position="246"/>
    </location>
</feature>
<feature type="binding site" evidence="2">
    <location>
        <begin position="49"/>
        <end position="56"/>
    </location>
    <ligand>
        <name>ATP</name>
        <dbReference type="ChEBI" id="CHEBI:30616"/>
    </ligand>
</feature>
<protein>
    <recommendedName>
        <fullName>Putative ABC transporter ATP-binding protein SCO3161</fullName>
        <ecNumber>7.-.-.-</ecNumber>
    </recommendedName>
</protein>
<comment type="function">
    <text evidence="1">Probably part of an ABC transporter complex. Responsible for energy coupling to the transport system (By similarity).</text>
</comment>
<comment type="subcellular location">
    <subcellularLocation>
        <location evidence="1">Cell membrane</location>
        <topology evidence="1">Peripheral membrane protein</topology>
    </subcellularLocation>
</comment>
<comment type="similarity">
    <text evidence="3">Belongs to the ABC transporter superfamily.</text>
</comment>